<keyword id="KW-0067">ATP-binding</keyword>
<keyword id="KW-0963">Cytoplasm</keyword>
<keyword id="KW-0418">Kinase</keyword>
<keyword id="KW-0479">Metal-binding</keyword>
<keyword id="KW-0545">Nucleotide biosynthesis</keyword>
<keyword id="KW-0547">Nucleotide-binding</keyword>
<keyword id="KW-1185">Reference proteome</keyword>
<keyword id="KW-0808">Transferase</keyword>
<keyword id="KW-0862">Zinc</keyword>
<gene>
    <name evidence="1" type="primary">adk</name>
    <name type="ordered locus">MYCGA0710</name>
    <name type="ORF">MGA_0743</name>
</gene>
<feature type="chain" id="PRO_0000158796" description="Adenylate kinase">
    <location>
        <begin position="1"/>
        <end position="214"/>
    </location>
</feature>
<feature type="region of interest" description="NMP" evidence="1">
    <location>
        <begin position="31"/>
        <end position="61"/>
    </location>
</feature>
<feature type="region of interest" description="LID" evidence="1">
    <location>
        <begin position="124"/>
        <end position="163"/>
    </location>
</feature>
<feature type="binding site" evidence="1">
    <location>
        <begin position="11"/>
        <end position="16"/>
    </location>
    <ligand>
        <name>ATP</name>
        <dbReference type="ChEBI" id="CHEBI:30616"/>
    </ligand>
</feature>
<feature type="binding site" evidence="1">
    <location>
        <position position="32"/>
    </location>
    <ligand>
        <name>AMP</name>
        <dbReference type="ChEBI" id="CHEBI:456215"/>
    </ligand>
</feature>
<feature type="binding site" evidence="1">
    <location>
        <position position="37"/>
    </location>
    <ligand>
        <name>AMP</name>
        <dbReference type="ChEBI" id="CHEBI:456215"/>
    </ligand>
</feature>
<feature type="binding site" evidence="1">
    <location>
        <begin position="59"/>
        <end position="61"/>
    </location>
    <ligand>
        <name>AMP</name>
        <dbReference type="ChEBI" id="CHEBI:456215"/>
    </ligand>
</feature>
<feature type="binding site" evidence="1">
    <location>
        <begin position="87"/>
        <end position="90"/>
    </location>
    <ligand>
        <name>AMP</name>
        <dbReference type="ChEBI" id="CHEBI:456215"/>
    </ligand>
</feature>
<feature type="binding site" evidence="1">
    <location>
        <position position="94"/>
    </location>
    <ligand>
        <name>AMP</name>
        <dbReference type="ChEBI" id="CHEBI:456215"/>
    </ligand>
</feature>
<feature type="binding site" evidence="1">
    <location>
        <position position="125"/>
    </location>
    <ligand>
        <name>ATP</name>
        <dbReference type="ChEBI" id="CHEBI:30616"/>
    </ligand>
</feature>
<feature type="binding site" evidence="1">
    <location>
        <position position="128"/>
    </location>
    <ligand>
        <name>Zn(2+)</name>
        <dbReference type="ChEBI" id="CHEBI:29105"/>
        <note>structural</note>
    </ligand>
</feature>
<feature type="binding site" evidence="1">
    <location>
        <position position="131"/>
    </location>
    <ligand>
        <name>Zn(2+)</name>
        <dbReference type="ChEBI" id="CHEBI:29105"/>
        <note>structural</note>
    </ligand>
</feature>
<feature type="binding site" evidence="1">
    <location>
        <begin position="134"/>
        <end position="135"/>
    </location>
    <ligand>
        <name>ATP</name>
        <dbReference type="ChEBI" id="CHEBI:30616"/>
    </ligand>
</feature>
<feature type="binding site" evidence="1">
    <location>
        <position position="150"/>
    </location>
    <ligand>
        <name>Zn(2+)</name>
        <dbReference type="ChEBI" id="CHEBI:29105"/>
        <note>structural</note>
    </ligand>
</feature>
<feature type="binding site" evidence="1">
    <location>
        <position position="153"/>
    </location>
    <ligand>
        <name>Zn(2+)</name>
        <dbReference type="ChEBI" id="CHEBI:29105"/>
        <note>structural</note>
    </ligand>
</feature>
<feature type="binding site" evidence="1">
    <location>
        <position position="160"/>
    </location>
    <ligand>
        <name>AMP</name>
        <dbReference type="ChEBI" id="CHEBI:456215"/>
    </ligand>
</feature>
<feature type="binding site" evidence="1">
    <location>
        <position position="171"/>
    </location>
    <ligand>
        <name>AMP</name>
        <dbReference type="ChEBI" id="CHEBI:456215"/>
    </ligand>
</feature>
<feature type="binding site" evidence="1">
    <location>
        <position position="199"/>
    </location>
    <ligand>
        <name>ATP</name>
        <dbReference type="ChEBI" id="CHEBI:30616"/>
    </ligand>
</feature>
<feature type="sequence conflict" description="In Ref. 1; AAB95407." evidence="2" ref="1">
    <original>L</original>
    <variation>S</variation>
    <location>
        <position position="124"/>
    </location>
</feature>
<feature type="sequence conflict" description="In Ref. 1; AAB95407." evidence="2" ref="1">
    <original>V</original>
    <variation>L</variation>
    <location>
        <position position="194"/>
    </location>
</feature>
<sequence>MIRLIFLGAPGTGKGTISSYLKEQHGFFHISSGDLFRFYAKEEKTALAEEIKSYINNGLYVPDELTNRTVADFYHKNQSQDKIIFDGYPRTLNQCEYIDEIIKFTHVILLQPTDWDMIINRLSLRRSCPQCKRIYNINSVDFKPKVANLCDLCKVELIHRKDDDPSVVSTRINVYNEQTKPVIEYYKKKNLLHVVDANKSFEELYKLVLEIVNK</sequence>
<proteinExistence type="inferred from homology"/>
<dbReference type="EC" id="2.7.4.3" evidence="1"/>
<dbReference type="EMBL" id="AF036708">
    <property type="protein sequence ID" value="AAB95407.1"/>
    <property type="molecule type" value="Genomic_DNA"/>
</dbReference>
<dbReference type="EMBL" id="AE015450">
    <property type="protein sequence ID" value="AAP56421.2"/>
    <property type="molecule type" value="Genomic_DNA"/>
</dbReference>
<dbReference type="RefSeq" id="WP_011113300.1">
    <property type="nucleotide sequence ID" value="NC_004829.2"/>
</dbReference>
<dbReference type="SMR" id="O52352"/>
<dbReference type="KEGG" id="mga:MGA_0743"/>
<dbReference type="PATRIC" id="fig|233150.7.peg.75"/>
<dbReference type="HOGENOM" id="CLU_032354_1_2_14"/>
<dbReference type="OrthoDB" id="9805030at2"/>
<dbReference type="UniPathway" id="UPA00588">
    <property type="reaction ID" value="UER00649"/>
</dbReference>
<dbReference type="Proteomes" id="UP000001418">
    <property type="component" value="Chromosome"/>
</dbReference>
<dbReference type="GO" id="GO:0005737">
    <property type="term" value="C:cytoplasm"/>
    <property type="evidence" value="ECO:0007669"/>
    <property type="project" value="UniProtKB-SubCell"/>
</dbReference>
<dbReference type="GO" id="GO:0004017">
    <property type="term" value="F:adenylate kinase activity"/>
    <property type="evidence" value="ECO:0007669"/>
    <property type="project" value="UniProtKB-UniRule"/>
</dbReference>
<dbReference type="GO" id="GO:0005524">
    <property type="term" value="F:ATP binding"/>
    <property type="evidence" value="ECO:0007669"/>
    <property type="project" value="UniProtKB-UniRule"/>
</dbReference>
<dbReference type="GO" id="GO:0008270">
    <property type="term" value="F:zinc ion binding"/>
    <property type="evidence" value="ECO:0007669"/>
    <property type="project" value="UniProtKB-UniRule"/>
</dbReference>
<dbReference type="GO" id="GO:0044209">
    <property type="term" value="P:AMP salvage"/>
    <property type="evidence" value="ECO:0007669"/>
    <property type="project" value="UniProtKB-UniRule"/>
</dbReference>
<dbReference type="CDD" id="cd01428">
    <property type="entry name" value="ADK"/>
    <property type="match status" value="1"/>
</dbReference>
<dbReference type="Gene3D" id="3.40.50.300">
    <property type="entry name" value="P-loop containing nucleotide triphosphate hydrolases"/>
    <property type="match status" value="1"/>
</dbReference>
<dbReference type="HAMAP" id="MF_00235">
    <property type="entry name" value="Adenylate_kinase_Adk"/>
    <property type="match status" value="1"/>
</dbReference>
<dbReference type="InterPro" id="IPR006259">
    <property type="entry name" value="Adenyl_kin_sub"/>
</dbReference>
<dbReference type="InterPro" id="IPR000850">
    <property type="entry name" value="Adenylat/UMP-CMP_kin"/>
</dbReference>
<dbReference type="InterPro" id="IPR033690">
    <property type="entry name" value="Adenylat_kinase_CS"/>
</dbReference>
<dbReference type="InterPro" id="IPR007862">
    <property type="entry name" value="Adenylate_kinase_lid-dom"/>
</dbReference>
<dbReference type="InterPro" id="IPR027417">
    <property type="entry name" value="P-loop_NTPase"/>
</dbReference>
<dbReference type="NCBIfam" id="TIGR01351">
    <property type="entry name" value="adk"/>
    <property type="match status" value="1"/>
</dbReference>
<dbReference type="PANTHER" id="PTHR23359">
    <property type="entry name" value="NUCLEOTIDE KINASE"/>
    <property type="match status" value="1"/>
</dbReference>
<dbReference type="Pfam" id="PF00406">
    <property type="entry name" value="ADK"/>
    <property type="match status" value="1"/>
</dbReference>
<dbReference type="Pfam" id="PF05191">
    <property type="entry name" value="ADK_lid"/>
    <property type="match status" value="1"/>
</dbReference>
<dbReference type="PRINTS" id="PR00094">
    <property type="entry name" value="ADENYLTKNASE"/>
</dbReference>
<dbReference type="SUPFAM" id="SSF52540">
    <property type="entry name" value="P-loop containing nucleoside triphosphate hydrolases"/>
    <property type="match status" value="1"/>
</dbReference>
<dbReference type="PROSITE" id="PS00113">
    <property type="entry name" value="ADENYLATE_KINASE"/>
    <property type="match status" value="1"/>
</dbReference>
<name>KAD_MYCGA</name>
<protein>
    <recommendedName>
        <fullName evidence="1">Adenylate kinase</fullName>
        <shortName evidence="1">AK</shortName>
        <ecNumber evidence="1">2.7.4.3</ecNumber>
    </recommendedName>
    <alternativeName>
        <fullName evidence="1">ATP-AMP transphosphorylase</fullName>
    </alternativeName>
    <alternativeName>
        <fullName evidence="1">ATP:AMP phosphotransferase</fullName>
    </alternativeName>
    <alternativeName>
        <fullName evidence="1">Adenylate monophosphate kinase</fullName>
    </alternativeName>
</protein>
<accession>O52352</accession>
<comment type="function">
    <text evidence="1">Catalyzes the reversible transfer of the terminal phosphate group between ATP and AMP. Plays an important role in cellular energy homeostasis and in adenine nucleotide metabolism.</text>
</comment>
<comment type="catalytic activity">
    <reaction evidence="1">
        <text>AMP + ATP = 2 ADP</text>
        <dbReference type="Rhea" id="RHEA:12973"/>
        <dbReference type="ChEBI" id="CHEBI:30616"/>
        <dbReference type="ChEBI" id="CHEBI:456215"/>
        <dbReference type="ChEBI" id="CHEBI:456216"/>
        <dbReference type="EC" id="2.7.4.3"/>
    </reaction>
</comment>
<comment type="pathway">
    <text evidence="1">Purine metabolism; AMP biosynthesis via salvage pathway; AMP from ADP: step 1/1.</text>
</comment>
<comment type="subunit">
    <text evidence="1">Monomer.</text>
</comment>
<comment type="subcellular location">
    <subcellularLocation>
        <location evidence="1">Cytoplasm</location>
    </subcellularLocation>
</comment>
<comment type="domain">
    <text evidence="1">Consists of three domains, a large central CORE domain and two small peripheral domains, NMPbind and LID, which undergo movements during catalysis. The LID domain closes over the site of phosphoryl transfer upon ATP binding. Assembling and dissambling the active center during each catalytic cycle provides an effective means to prevent ATP hydrolysis. Some bacteria have evolved a zinc-coordinating structure that stabilizes the LID domain.</text>
</comment>
<comment type="similarity">
    <text evidence="1">Belongs to the adenylate kinase family.</text>
</comment>
<reference key="1">
    <citation type="journal article" date="2000" name="Mol. Biol. (Mosk.)">
        <title>Determination and analysis of the nucleotide sequence of a segment of a Mycoplasma gallisepticum strain A5969 chromosome, containing operons S10 and rrn23-5.</title>
        <authorList>
            <person name="Skamrov A.V."/>
            <person name="Gol'dman M.A."/>
            <person name="Feoktistova E.S."/>
            <person name="Bibilashvili R.S."/>
        </authorList>
    </citation>
    <scope>NUCLEOTIDE SEQUENCE [GENOMIC DNA]</scope>
    <source>
        <strain>A5969Var.B</strain>
    </source>
</reference>
<reference key="2">
    <citation type="journal article" date="2003" name="Microbiology">
        <title>The complete genome sequence of the avian pathogen Mycoplasma gallisepticum strain R(low).</title>
        <authorList>
            <person name="Papazisi L."/>
            <person name="Gorton T.S."/>
            <person name="Kutish G."/>
            <person name="Markham P.F."/>
            <person name="Browning G.F."/>
            <person name="Nguyen D.K."/>
            <person name="Swartzell S."/>
            <person name="Madan A."/>
            <person name="Mahairas G."/>
            <person name="Geary S.J."/>
        </authorList>
    </citation>
    <scope>NUCLEOTIDE SEQUENCE [LARGE SCALE GENOMIC DNA]</scope>
    <source>
        <strain>R(low / passage 15 / clone 2)</strain>
    </source>
</reference>
<organism>
    <name type="scientific">Mycoplasmoides gallisepticum (strain R(low / passage 15 / clone 2))</name>
    <name type="common">Mycoplasma gallisepticum</name>
    <dbReference type="NCBI Taxonomy" id="710127"/>
    <lineage>
        <taxon>Bacteria</taxon>
        <taxon>Bacillati</taxon>
        <taxon>Mycoplasmatota</taxon>
        <taxon>Mycoplasmoidales</taxon>
        <taxon>Mycoplasmoidaceae</taxon>
        <taxon>Mycoplasmoides</taxon>
    </lineage>
</organism>
<evidence type="ECO:0000255" key="1">
    <source>
        <dbReference type="HAMAP-Rule" id="MF_00235"/>
    </source>
</evidence>
<evidence type="ECO:0000305" key="2"/>